<protein>
    <recommendedName>
        <fullName>Calpain-like protease palB</fullName>
        <ecNumber>3.4.22.-</ecNumber>
    </recommendedName>
    <alternativeName>
        <fullName>Cysteine protease palB</fullName>
    </alternativeName>
</protein>
<feature type="chain" id="PRO_0000207742" description="Calpain-like protease palB">
    <location>
        <begin position="1"/>
        <end position="847"/>
    </location>
</feature>
<feature type="domain" description="MIT">
    <location>
        <begin position="1"/>
        <end position="84"/>
    </location>
</feature>
<feature type="domain" description="Calpain catalytic" evidence="1">
    <location>
        <begin position="116"/>
        <end position="436"/>
    </location>
</feature>
<feature type="active site" evidence="1">
    <location>
        <position position="198"/>
    </location>
</feature>
<feature type="active site" evidence="1">
    <location>
        <position position="366"/>
    </location>
</feature>
<feature type="active site" evidence="1">
    <location>
        <position position="386"/>
    </location>
</feature>
<comment type="function">
    <text evidence="2 3 4">Required for the proteolytic cleavage of the transcription factor pacC in response to alkaline ambient pH. Probably is the signaling protease that mediates the first proteolytic cleavage within the signaling protease box of pacC, yielding the 53 kDa 'open' conformation intermediate protein, which is committed to further processing. Required for virulence in invasive pulmonary aspergillosis (IPA).</text>
</comment>
<comment type="similarity">
    <text evidence="5">Belongs to the peptidase C2 family. PalB/RIM13 subfamily.</text>
</comment>
<evidence type="ECO:0000255" key="1">
    <source>
        <dbReference type="PROSITE-ProRule" id="PRU00239"/>
    </source>
</evidence>
<evidence type="ECO:0000269" key="2">
    <source>
    </source>
</evidence>
<evidence type="ECO:0000269" key="3">
    <source>
    </source>
</evidence>
<evidence type="ECO:0000269" key="4">
    <source>
    </source>
</evidence>
<evidence type="ECO:0000305" key="5"/>
<dbReference type="EC" id="3.4.22.-"/>
<dbReference type="EMBL" id="Z54244">
    <property type="protein sequence ID" value="CAA91013.2"/>
    <property type="molecule type" value="Genomic_DNA"/>
</dbReference>
<dbReference type="EMBL" id="AACD01000005">
    <property type="protein sequence ID" value="EAA66129.1"/>
    <property type="molecule type" value="Genomic_DNA"/>
</dbReference>
<dbReference type="EMBL" id="BN001308">
    <property type="protein sequence ID" value="CBF89869.1"/>
    <property type="molecule type" value="Genomic_DNA"/>
</dbReference>
<dbReference type="RefSeq" id="XP_657860.1">
    <property type="nucleotide sequence ID" value="XM_652768.1"/>
</dbReference>
<dbReference type="STRING" id="227321.Q00204"/>
<dbReference type="MEROPS" id="C02.008"/>
<dbReference type="EnsemblFungi" id="CBF89869">
    <property type="protein sequence ID" value="CBF89869"/>
    <property type="gene ID" value="ANIA_00256"/>
</dbReference>
<dbReference type="KEGG" id="ani:ANIA_00256"/>
<dbReference type="VEuPathDB" id="FungiDB:AN0256"/>
<dbReference type="eggNOG" id="KOG0045">
    <property type="taxonomic scope" value="Eukaryota"/>
</dbReference>
<dbReference type="HOGENOM" id="CLU_006770_1_0_1"/>
<dbReference type="InParanoid" id="Q00204"/>
<dbReference type="OMA" id="GDYRRGC"/>
<dbReference type="OrthoDB" id="167576at2759"/>
<dbReference type="Proteomes" id="UP000000560">
    <property type="component" value="Chromosome VIII"/>
</dbReference>
<dbReference type="GO" id="GO:0000815">
    <property type="term" value="C:ESCRT III complex"/>
    <property type="evidence" value="ECO:0000315"/>
    <property type="project" value="AspGD"/>
</dbReference>
<dbReference type="GO" id="GO:0004198">
    <property type="term" value="F:calcium-dependent cysteine-type endopeptidase activity"/>
    <property type="evidence" value="ECO:0000247"/>
    <property type="project" value="AspGD"/>
</dbReference>
<dbReference type="GO" id="GO:0004197">
    <property type="term" value="F:cysteine-type endopeptidase activity"/>
    <property type="evidence" value="ECO:0000318"/>
    <property type="project" value="GO_Central"/>
</dbReference>
<dbReference type="GO" id="GO:0071467">
    <property type="term" value="P:cellular response to pH"/>
    <property type="evidence" value="ECO:0000315"/>
    <property type="project" value="AspGD"/>
</dbReference>
<dbReference type="GO" id="GO:0042318">
    <property type="term" value="P:penicillin biosynthetic process"/>
    <property type="evidence" value="ECO:0000315"/>
    <property type="project" value="AspGD"/>
</dbReference>
<dbReference type="GO" id="GO:1900198">
    <property type="term" value="P:positive regulation of penicillin biosynthetic process"/>
    <property type="evidence" value="ECO:0000315"/>
    <property type="project" value="AspGD"/>
</dbReference>
<dbReference type="GO" id="GO:0006508">
    <property type="term" value="P:proteolysis"/>
    <property type="evidence" value="ECO:0000318"/>
    <property type="project" value="GO_Central"/>
</dbReference>
<dbReference type="GO" id="GO:1900376">
    <property type="term" value="P:regulation of secondary metabolite biosynthetic process"/>
    <property type="evidence" value="ECO:0000315"/>
    <property type="project" value="AspGD"/>
</dbReference>
<dbReference type="CDD" id="cd00044">
    <property type="entry name" value="CysPc"/>
    <property type="match status" value="1"/>
</dbReference>
<dbReference type="CDD" id="cd02656">
    <property type="entry name" value="MIT"/>
    <property type="match status" value="1"/>
</dbReference>
<dbReference type="Gene3D" id="2.60.120.380">
    <property type="match status" value="1"/>
</dbReference>
<dbReference type="Gene3D" id="3.90.70.10">
    <property type="entry name" value="Cysteine proteinases"/>
    <property type="match status" value="1"/>
</dbReference>
<dbReference type="Gene3D" id="1.20.58.80">
    <property type="entry name" value="Phosphotransferase system, lactose/cellobiose-type IIA subunit"/>
    <property type="match status" value="1"/>
</dbReference>
<dbReference type="InterPro" id="IPR022684">
    <property type="entry name" value="Calpain_cysteine_protease"/>
</dbReference>
<dbReference type="InterPro" id="IPR022682">
    <property type="entry name" value="Calpain_domain_III"/>
</dbReference>
<dbReference type="InterPro" id="IPR022683">
    <property type="entry name" value="Calpain_III"/>
</dbReference>
<dbReference type="InterPro" id="IPR036213">
    <property type="entry name" value="Calpain_III_sf"/>
</dbReference>
<dbReference type="InterPro" id="IPR007330">
    <property type="entry name" value="MIT_dom"/>
</dbReference>
<dbReference type="InterPro" id="IPR036181">
    <property type="entry name" value="MIT_dom_sf"/>
</dbReference>
<dbReference type="InterPro" id="IPR051297">
    <property type="entry name" value="PalB/RIM13_Calpain-like"/>
</dbReference>
<dbReference type="InterPro" id="IPR038765">
    <property type="entry name" value="Papain-like_cys_pep_sf"/>
</dbReference>
<dbReference type="InterPro" id="IPR001300">
    <property type="entry name" value="Peptidase_C2_calpain_cat"/>
</dbReference>
<dbReference type="PANTHER" id="PTHR46143">
    <property type="entry name" value="CALPAIN-7"/>
    <property type="match status" value="1"/>
</dbReference>
<dbReference type="PANTHER" id="PTHR46143:SF1">
    <property type="entry name" value="CALPAIN-7"/>
    <property type="match status" value="1"/>
</dbReference>
<dbReference type="Pfam" id="PF01067">
    <property type="entry name" value="Calpain_III"/>
    <property type="match status" value="1"/>
</dbReference>
<dbReference type="Pfam" id="PF25435">
    <property type="entry name" value="PalB_C"/>
    <property type="match status" value="1"/>
</dbReference>
<dbReference type="Pfam" id="PF00648">
    <property type="entry name" value="Peptidase_C2"/>
    <property type="match status" value="1"/>
</dbReference>
<dbReference type="PRINTS" id="PR00704">
    <property type="entry name" value="CALPAIN"/>
</dbReference>
<dbReference type="SMART" id="SM00720">
    <property type="entry name" value="calpain_III"/>
    <property type="match status" value="1"/>
</dbReference>
<dbReference type="SMART" id="SM00230">
    <property type="entry name" value="CysPc"/>
    <property type="match status" value="1"/>
</dbReference>
<dbReference type="SMART" id="SM00745">
    <property type="entry name" value="MIT"/>
    <property type="match status" value="1"/>
</dbReference>
<dbReference type="SUPFAM" id="SSF49758">
    <property type="entry name" value="Calpain large subunit, middle domain (domain III)"/>
    <property type="match status" value="2"/>
</dbReference>
<dbReference type="SUPFAM" id="SSF54001">
    <property type="entry name" value="Cysteine proteinases"/>
    <property type="match status" value="1"/>
</dbReference>
<dbReference type="SUPFAM" id="SSF116846">
    <property type="entry name" value="MIT domain"/>
    <property type="match status" value="1"/>
</dbReference>
<dbReference type="PROSITE" id="PS50203">
    <property type="entry name" value="CALPAIN_CAT"/>
    <property type="match status" value="1"/>
</dbReference>
<name>PALB_EMENI</name>
<reference key="1">
    <citation type="journal article" date="1995" name="J. Biol. Chem.">
        <title>Signalling of ambient pH in Aspergillus nidulans involves a cysteine protease.</title>
        <authorList>
            <person name="Denison S.H."/>
            <person name="Orejas M."/>
            <person name="Arst H.N. Jr."/>
        </authorList>
    </citation>
    <scope>NUCLEOTIDE SEQUENCE [GENOMIC DNA]</scope>
    <scope>FUNCTION</scope>
</reference>
<reference key="2">
    <citation type="journal article" date="2005" name="Nature">
        <title>Sequencing of Aspergillus nidulans and comparative analysis with A. fumigatus and A. oryzae.</title>
        <authorList>
            <person name="Galagan J.E."/>
            <person name="Calvo S.E."/>
            <person name="Cuomo C."/>
            <person name="Ma L.-J."/>
            <person name="Wortman J.R."/>
            <person name="Batzoglou S."/>
            <person name="Lee S.-I."/>
            <person name="Bastuerkmen M."/>
            <person name="Spevak C.C."/>
            <person name="Clutterbuck J."/>
            <person name="Kapitonov V."/>
            <person name="Jurka J."/>
            <person name="Scazzocchio C."/>
            <person name="Farman M.L."/>
            <person name="Butler J."/>
            <person name="Purcell S."/>
            <person name="Harris S."/>
            <person name="Braus G.H."/>
            <person name="Draht O."/>
            <person name="Busch S."/>
            <person name="D'Enfert C."/>
            <person name="Bouchier C."/>
            <person name="Goldman G.H."/>
            <person name="Bell-Pedersen D."/>
            <person name="Griffiths-Jones S."/>
            <person name="Doonan J.H."/>
            <person name="Yu J."/>
            <person name="Vienken K."/>
            <person name="Pain A."/>
            <person name="Freitag M."/>
            <person name="Selker E.U."/>
            <person name="Archer D.B."/>
            <person name="Penalva M.A."/>
            <person name="Oakley B.R."/>
            <person name="Momany M."/>
            <person name="Tanaka T."/>
            <person name="Kumagai T."/>
            <person name="Asai K."/>
            <person name="Machida M."/>
            <person name="Nierman W.C."/>
            <person name="Denning D.W."/>
            <person name="Caddick M.X."/>
            <person name="Hynes M."/>
            <person name="Paoletti M."/>
            <person name="Fischer R."/>
            <person name="Miller B.L."/>
            <person name="Dyer P.S."/>
            <person name="Sachs M.S."/>
            <person name="Osmani S.A."/>
            <person name="Birren B.W."/>
        </authorList>
    </citation>
    <scope>NUCLEOTIDE SEQUENCE [LARGE SCALE GENOMIC DNA]</scope>
    <source>
        <strain>FGSC A4 / ATCC 38163 / CBS 112.46 / NRRL 194 / M139</strain>
    </source>
</reference>
<reference key="3">
    <citation type="journal article" date="2009" name="Fungal Genet. Biol.">
        <title>The 2008 update of the Aspergillus nidulans genome annotation: a community effort.</title>
        <authorList>
            <person name="Wortman J.R."/>
            <person name="Gilsenan J.M."/>
            <person name="Joardar V."/>
            <person name="Deegan J."/>
            <person name="Clutterbuck J."/>
            <person name="Andersen M.R."/>
            <person name="Archer D."/>
            <person name="Bencina M."/>
            <person name="Braus G."/>
            <person name="Coutinho P."/>
            <person name="von Dohren H."/>
            <person name="Doonan J."/>
            <person name="Driessen A.J."/>
            <person name="Durek P."/>
            <person name="Espeso E."/>
            <person name="Fekete E."/>
            <person name="Flipphi M."/>
            <person name="Estrada C.G."/>
            <person name="Geysens S."/>
            <person name="Goldman G."/>
            <person name="de Groot P.W."/>
            <person name="Hansen K."/>
            <person name="Harris S.D."/>
            <person name="Heinekamp T."/>
            <person name="Helmstaedt K."/>
            <person name="Henrissat B."/>
            <person name="Hofmann G."/>
            <person name="Homan T."/>
            <person name="Horio T."/>
            <person name="Horiuchi H."/>
            <person name="James S."/>
            <person name="Jones M."/>
            <person name="Karaffa L."/>
            <person name="Karanyi Z."/>
            <person name="Kato M."/>
            <person name="Keller N."/>
            <person name="Kelly D.E."/>
            <person name="Kiel J.A."/>
            <person name="Kim J.M."/>
            <person name="van der Klei I.J."/>
            <person name="Klis F.M."/>
            <person name="Kovalchuk A."/>
            <person name="Krasevec N."/>
            <person name="Kubicek C.P."/>
            <person name="Liu B."/>
            <person name="Maccabe A."/>
            <person name="Meyer V."/>
            <person name="Mirabito P."/>
            <person name="Miskei M."/>
            <person name="Mos M."/>
            <person name="Mullins J."/>
            <person name="Nelson D.R."/>
            <person name="Nielsen J."/>
            <person name="Oakley B.R."/>
            <person name="Osmani S.A."/>
            <person name="Pakula T."/>
            <person name="Paszewski A."/>
            <person name="Paulsen I."/>
            <person name="Pilsyk S."/>
            <person name="Pocsi I."/>
            <person name="Punt P.J."/>
            <person name="Ram A.F."/>
            <person name="Ren Q."/>
            <person name="Robellet X."/>
            <person name="Robson G."/>
            <person name="Seiboth B."/>
            <person name="van Solingen P."/>
            <person name="Specht T."/>
            <person name="Sun J."/>
            <person name="Taheri-Talesh N."/>
            <person name="Takeshita N."/>
            <person name="Ussery D."/>
            <person name="vanKuyk P.A."/>
            <person name="Visser H."/>
            <person name="van de Vondervoort P.J."/>
            <person name="de Vries R.P."/>
            <person name="Walton J."/>
            <person name="Xiang X."/>
            <person name="Xiong Y."/>
            <person name="Zeng A.P."/>
            <person name="Brandt B.W."/>
            <person name="Cornell M.J."/>
            <person name="van den Hondel C.A."/>
            <person name="Visser J."/>
            <person name="Oliver S.G."/>
            <person name="Turner G."/>
        </authorList>
    </citation>
    <scope>GENOME REANNOTATION</scope>
    <source>
        <strain>FGSC A4 / ATCC 38163 / CBS 112.46 / NRRL 194 / M139</strain>
    </source>
</reference>
<reference key="4">
    <citation type="journal article" date="1986" name="Mol. Gen. Genet.">
        <title>Regulation of gene expression by pH of the growth medium in Aspergillus nidulans.</title>
        <authorList>
            <person name="Caddick M.X."/>
            <person name="Brownlee A.G."/>
            <person name="Arst H.N. Jr."/>
        </authorList>
    </citation>
    <scope>FUNCTION</scope>
</reference>
<reference key="5">
    <citation type="journal article" date="2005" name="Mol. Microbiol.">
        <title>The Aspergillus pH-responsive transcription factor PacC regulates virulence.</title>
        <authorList>
            <person name="Bignell E."/>
            <person name="Negrete-Urtasun S."/>
            <person name="Calcagno A.M."/>
            <person name="Haynes K."/>
            <person name="Arst H.N. Jr."/>
            <person name="Rogers T."/>
        </authorList>
    </citation>
    <scope>FUNCTION</scope>
</reference>
<keyword id="KW-0378">Hydrolase</keyword>
<keyword id="KW-0645">Protease</keyword>
<keyword id="KW-1185">Reference proteome</keyword>
<keyword id="KW-0788">Thiol protease</keyword>
<organism>
    <name type="scientific">Emericella nidulans (strain FGSC A4 / ATCC 38163 / CBS 112.46 / NRRL 194 / M139)</name>
    <name type="common">Aspergillus nidulans</name>
    <dbReference type="NCBI Taxonomy" id="227321"/>
    <lineage>
        <taxon>Eukaryota</taxon>
        <taxon>Fungi</taxon>
        <taxon>Dikarya</taxon>
        <taxon>Ascomycota</taxon>
        <taxon>Pezizomycotina</taxon>
        <taxon>Eurotiomycetes</taxon>
        <taxon>Eurotiomycetidae</taxon>
        <taxon>Eurotiales</taxon>
        <taxon>Aspergillaceae</taxon>
        <taxon>Aspergillus</taxon>
        <taxon>Aspergillus subgen. Nidulantes</taxon>
    </lineage>
</organism>
<gene>
    <name type="primary">palB</name>
    <name type="ORF">AN0256</name>
</gene>
<accession>Q00204</accession>
<accession>C8VUJ8</accession>
<accession>Q5BGS4</accession>
<proteinExistence type="inferred from homology"/>
<sequence length="847" mass="94129">MSRTSSAPSQKSLISRALKAERDVITASSQSQALDAAIDAAEHYMKALALTSSSKDRNVLDAKCKEWLTRAEKIKGSEDWRSVAQSRRSRLRTPASTRKLTTREDIILLQGAKLNGFIFPPWKAEPSLTEFETGTNGDVLFTDKPDLHLSNLQRDIFAGWKRPHELLSGQVDDAGMPLNPVMTVSGNTDLVQDVLTDCSVVASLCATTSRSERGLDDTLLPIVYPCIHNSMKSDISPSGKYIFRFYFNGCFRKVVIDDRLPSSKTSRSLYMIDRNHRNFMWPALVEKAYLKLRGGYEFPGSNSGTDLWVLTGWIPEQVFLHSDEVTADQIWSDLFKSFHSGDVLLTIGTGKLTEREQKELGLVSEHDYAILDMKELKGRRQFLIKNPWAGTDAVYPALFADPGPFPNSPFLSPGTFWMDCEMVLQNFENLYLNWNPGIFAYQEDIHFTWDLSTGKGMAGCFVKNPQFSVYTERGGVVWLLLGRHLRTIESRASEEDERFGFISIYVFKGGKRVALSDGALHRGPYVDSPNTLMKLDVPPRSTYTAVVSEESLPRVSQNFTISAFSDSPVRISHAPNKYICVTKVQGSWTPTTAGGNAESARYSLNPQFSIVLSDPTDISIVLEPSDQELATHVKLFWSGGKRIARVRSRDIVADSGDYRRGGSLVEKQDLDPGEYTIVVSTFAPDQYGSFTLWVSTNITCEVTQLPSEAAGRRAVLSDIGVLLPGQDRMLAPLTTPRLTRVKLIARSRESRIGNRPVGPSPLLMTVELGQGPYKEILATSEDGDHSDSISGVRVEDFDLQPGLEERGGVWIVLERIGGPGGQVEDHFEVEALGEERVEIGEWIVEDA</sequence>